<accession>Q57J46</accession>
<dbReference type="EMBL" id="AE017220">
    <property type="protein sequence ID" value="AAX67266.1"/>
    <property type="molecule type" value="Genomic_DNA"/>
</dbReference>
<dbReference type="RefSeq" id="WP_000062611.1">
    <property type="nucleotide sequence ID" value="NC_006905.1"/>
</dbReference>
<dbReference type="SMR" id="Q57J46"/>
<dbReference type="GeneID" id="93778681"/>
<dbReference type="KEGG" id="sec:SCH_3360"/>
<dbReference type="HOGENOM" id="CLU_098428_0_0_6"/>
<dbReference type="Proteomes" id="UP000000538">
    <property type="component" value="Chromosome"/>
</dbReference>
<dbReference type="GO" id="GO:1990904">
    <property type="term" value="C:ribonucleoprotein complex"/>
    <property type="evidence" value="ECO:0007669"/>
    <property type="project" value="UniProtKB-KW"/>
</dbReference>
<dbReference type="GO" id="GO:0005840">
    <property type="term" value="C:ribosome"/>
    <property type="evidence" value="ECO:0007669"/>
    <property type="project" value="UniProtKB-KW"/>
</dbReference>
<dbReference type="GO" id="GO:0019843">
    <property type="term" value="F:rRNA binding"/>
    <property type="evidence" value="ECO:0007669"/>
    <property type="project" value="UniProtKB-UniRule"/>
</dbReference>
<dbReference type="GO" id="GO:0003735">
    <property type="term" value="F:structural constituent of ribosome"/>
    <property type="evidence" value="ECO:0007669"/>
    <property type="project" value="InterPro"/>
</dbReference>
<dbReference type="GO" id="GO:0006412">
    <property type="term" value="P:translation"/>
    <property type="evidence" value="ECO:0007669"/>
    <property type="project" value="UniProtKB-UniRule"/>
</dbReference>
<dbReference type="FunFam" id="3.30.1370.30:FF:000003">
    <property type="entry name" value="30S ribosomal protein S8"/>
    <property type="match status" value="1"/>
</dbReference>
<dbReference type="FunFam" id="3.30.1490.10:FF:000001">
    <property type="entry name" value="30S ribosomal protein S8"/>
    <property type="match status" value="1"/>
</dbReference>
<dbReference type="Gene3D" id="3.30.1370.30">
    <property type="match status" value="1"/>
</dbReference>
<dbReference type="Gene3D" id="3.30.1490.10">
    <property type="match status" value="1"/>
</dbReference>
<dbReference type="HAMAP" id="MF_01302_B">
    <property type="entry name" value="Ribosomal_uS8_B"/>
    <property type="match status" value="1"/>
</dbReference>
<dbReference type="InterPro" id="IPR000630">
    <property type="entry name" value="Ribosomal_uS8"/>
</dbReference>
<dbReference type="InterPro" id="IPR047863">
    <property type="entry name" value="Ribosomal_uS8_CS"/>
</dbReference>
<dbReference type="InterPro" id="IPR035987">
    <property type="entry name" value="Ribosomal_uS8_sf"/>
</dbReference>
<dbReference type="NCBIfam" id="NF001109">
    <property type="entry name" value="PRK00136.1"/>
    <property type="match status" value="1"/>
</dbReference>
<dbReference type="PANTHER" id="PTHR11758">
    <property type="entry name" value="40S RIBOSOMAL PROTEIN S15A"/>
    <property type="match status" value="1"/>
</dbReference>
<dbReference type="Pfam" id="PF00410">
    <property type="entry name" value="Ribosomal_S8"/>
    <property type="match status" value="1"/>
</dbReference>
<dbReference type="SUPFAM" id="SSF56047">
    <property type="entry name" value="Ribosomal protein S8"/>
    <property type="match status" value="1"/>
</dbReference>
<dbReference type="PROSITE" id="PS00053">
    <property type="entry name" value="RIBOSOMAL_S8"/>
    <property type="match status" value="1"/>
</dbReference>
<sequence>MSMQDPIADMLTRIRNGQAANKAAVTMPSSKLKVAIANVLKEEGFIEDFKVEGDTKPELELTLKYFQGKAVVESIQRVSRPGLRIYKRKDELPKVMAGLGIAVVSTSKGVMTDRAARQAGLGGEIICYVA</sequence>
<comment type="function">
    <text evidence="2">One of the primary rRNA binding proteins, it binds directly to 16S rRNA central domain where it helps coordinate assembly of the platform of the 30S subunit.</text>
</comment>
<comment type="subunit">
    <text evidence="2">Part of the 30S ribosomal subunit. Contacts proteins S5 and S12.</text>
</comment>
<comment type="similarity">
    <text evidence="2">Belongs to the universal ribosomal protein uS8 family.</text>
</comment>
<evidence type="ECO:0000250" key="1"/>
<evidence type="ECO:0000255" key="2">
    <source>
        <dbReference type="HAMAP-Rule" id="MF_01302"/>
    </source>
</evidence>
<evidence type="ECO:0000305" key="3"/>
<feature type="initiator methionine" description="Removed" evidence="1">
    <location>
        <position position="1"/>
    </location>
</feature>
<feature type="chain" id="PRO_0000225890" description="Small ribosomal subunit protein uS8">
    <location>
        <begin position="2"/>
        <end position="130"/>
    </location>
</feature>
<organism>
    <name type="scientific">Salmonella choleraesuis (strain SC-B67)</name>
    <dbReference type="NCBI Taxonomy" id="321314"/>
    <lineage>
        <taxon>Bacteria</taxon>
        <taxon>Pseudomonadati</taxon>
        <taxon>Pseudomonadota</taxon>
        <taxon>Gammaproteobacteria</taxon>
        <taxon>Enterobacterales</taxon>
        <taxon>Enterobacteriaceae</taxon>
        <taxon>Salmonella</taxon>
    </lineage>
</organism>
<reference key="1">
    <citation type="journal article" date="2005" name="Nucleic Acids Res.">
        <title>The genome sequence of Salmonella enterica serovar Choleraesuis, a highly invasive and resistant zoonotic pathogen.</title>
        <authorList>
            <person name="Chiu C.-H."/>
            <person name="Tang P."/>
            <person name="Chu C."/>
            <person name="Hu S."/>
            <person name="Bao Q."/>
            <person name="Yu J."/>
            <person name="Chou Y.-Y."/>
            <person name="Wang H.-S."/>
            <person name="Lee Y.-S."/>
        </authorList>
    </citation>
    <scope>NUCLEOTIDE SEQUENCE [LARGE SCALE GENOMIC DNA]</scope>
    <source>
        <strain>SC-B67</strain>
    </source>
</reference>
<proteinExistence type="inferred from homology"/>
<keyword id="KW-0687">Ribonucleoprotein</keyword>
<keyword id="KW-0689">Ribosomal protein</keyword>
<keyword id="KW-0694">RNA-binding</keyword>
<keyword id="KW-0699">rRNA-binding</keyword>
<protein>
    <recommendedName>
        <fullName evidence="2">Small ribosomal subunit protein uS8</fullName>
    </recommendedName>
    <alternativeName>
        <fullName evidence="3">30S ribosomal protein S8</fullName>
    </alternativeName>
</protein>
<name>RS8_SALCH</name>
<gene>
    <name evidence="2" type="primary">rpsH</name>
    <name type="ordered locus">SCH_3360</name>
</gene>